<keyword id="KW-1217">Cell adhesion impairing toxin</keyword>
<keyword id="KW-1015">Disulfide bond</keyword>
<keyword id="KW-1199">Hemostasis impairing toxin</keyword>
<keyword id="KW-0378">Hydrolase</keyword>
<keyword id="KW-0479">Metal-binding</keyword>
<keyword id="KW-0482">Metalloprotease</keyword>
<keyword id="KW-1201">Platelet aggregation inhibiting toxin</keyword>
<keyword id="KW-0645">Protease</keyword>
<keyword id="KW-0964">Secreted</keyword>
<keyword id="KW-0800">Toxin</keyword>
<keyword id="KW-0862">Zinc</keyword>
<keyword id="KW-0865">Zymogen</keyword>
<protein>
    <recommendedName>
        <fullName>Zinc metalloproteinase-disintegrin salmosin-3</fullName>
        <ecNumber>3.4.24.-</ecNumber>
    </recommendedName>
    <alternativeName>
        <fullName>Snake venom metalloproteinase</fullName>
        <shortName>SVMP</shortName>
    </alternativeName>
</protein>
<name>VM2S3_GLOBR</name>
<feature type="chain" id="PRO_0000319477" description="Zinc metalloproteinase-disintegrin salmosin-3">
    <location>
        <begin position="1" status="less than"/>
        <end position="146"/>
    </location>
</feature>
<feature type="domain" description="Peptidase M12B" evidence="4">
    <location>
        <begin position="1" status="less than"/>
        <end position="57"/>
    </location>
</feature>
<feature type="domain" description="Disintegrin" evidence="3">
    <location>
        <begin position="65"/>
        <end position="146"/>
    </location>
</feature>
<feature type="short sequence motif" description="Cell attachment site">
    <location>
        <begin position="127"/>
        <end position="129"/>
    </location>
</feature>
<feature type="disulfide bond" evidence="4">
    <location>
        <begin position="2"/>
        <end position="37"/>
    </location>
</feature>
<feature type="disulfide bond" evidence="4">
    <location>
        <begin position="4"/>
        <end position="9"/>
    </location>
</feature>
<feature type="disulfide bond" evidence="5">
    <location>
        <begin position="68"/>
        <end position="87"/>
    </location>
</feature>
<feature type="disulfide bond" evidence="2">
    <location>
        <begin position="79"/>
        <end position="97"/>
    </location>
</feature>
<feature type="disulfide bond" evidence="2">
    <location>
        <begin position="81"/>
        <end position="92"/>
    </location>
</feature>
<feature type="disulfide bond" evidence="2">
    <location>
        <begin position="91"/>
        <end position="114"/>
    </location>
</feature>
<feature type="disulfide bond" evidence="2">
    <location>
        <begin position="105"/>
        <end position="111"/>
    </location>
</feature>
<feature type="disulfide bond" evidence="2">
    <location>
        <begin position="110"/>
        <end position="135"/>
    </location>
</feature>
<feature type="disulfide bond" evidence="2 3">
    <location>
        <begin position="123"/>
        <end position="142"/>
    </location>
</feature>
<feature type="non-terminal residue" evidence="5">
    <location>
        <position position="1"/>
    </location>
</feature>
<proteinExistence type="evidence at transcript level"/>
<accession>O93515</accession>
<evidence type="ECO:0000250" key="1"/>
<evidence type="ECO:0000250" key="2">
    <source>
        <dbReference type="UniProtKB" id="Q0NZX5"/>
    </source>
</evidence>
<evidence type="ECO:0000255" key="3">
    <source>
        <dbReference type="PROSITE-ProRule" id="PRU00068"/>
    </source>
</evidence>
<evidence type="ECO:0000255" key="4">
    <source>
        <dbReference type="PROSITE-ProRule" id="PRU00276"/>
    </source>
</evidence>
<evidence type="ECO:0000305" key="5"/>
<evidence type="ECO:0000305" key="6">
    <source>
    </source>
</evidence>
<dbReference type="EC" id="3.4.24.-"/>
<dbReference type="EMBL" id="AF055336">
    <property type="protein sequence ID" value="AAC42596.1"/>
    <property type="molecule type" value="mRNA"/>
</dbReference>
<dbReference type="SMR" id="O93515"/>
<dbReference type="GO" id="GO:0005576">
    <property type="term" value="C:extracellular region"/>
    <property type="evidence" value="ECO:0007669"/>
    <property type="project" value="UniProtKB-SubCell"/>
</dbReference>
<dbReference type="GO" id="GO:0005886">
    <property type="term" value="C:plasma membrane"/>
    <property type="evidence" value="ECO:0007669"/>
    <property type="project" value="TreeGrafter"/>
</dbReference>
<dbReference type="GO" id="GO:0046872">
    <property type="term" value="F:metal ion binding"/>
    <property type="evidence" value="ECO:0007669"/>
    <property type="project" value="UniProtKB-KW"/>
</dbReference>
<dbReference type="GO" id="GO:0004222">
    <property type="term" value="F:metalloendopeptidase activity"/>
    <property type="evidence" value="ECO:0007669"/>
    <property type="project" value="InterPro"/>
</dbReference>
<dbReference type="GO" id="GO:0090729">
    <property type="term" value="F:toxin activity"/>
    <property type="evidence" value="ECO:0007669"/>
    <property type="project" value="UniProtKB-KW"/>
</dbReference>
<dbReference type="GO" id="GO:0006508">
    <property type="term" value="P:proteolysis"/>
    <property type="evidence" value="ECO:0007669"/>
    <property type="project" value="UniProtKB-KW"/>
</dbReference>
<dbReference type="FunFam" id="4.10.70.10:FF:000003">
    <property type="entry name" value="Disintegrin and metalloproteinase domain-containing protein 17"/>
    <property type="match status" value="1"/>
</dbReference>
<dbReference type="Gene3D" id="4.10.70.10">
    <property type="entry name" value="Disintegrin domain"/>
    <property type="match status" value="1"/>
</dbReference>
<dbReference type="InterPro" id="IPR018358">
    <property type="entry name" value="Disintegrin_CS"/>
</dbReference>
<dbReference type="InterPro" id="IPR001762">
    <property type="entry name" value="Disintegrin_dom"/>
</dbReference>
<dbReference type="InterPro" id="IPR036436">
    <property type="entry name" value="Disintegrin_dom_sf"/>
</dbReference>
<dbReference type="InterPro" id="IPR001590">
    <property type="entry name" value="Peptidase_M12B"/>
</dbReference>
<dbReference type="PANTHER" id="PTHR11905">
    <property type="entry name" value="ADAM A DISINTEGRIN AND METALLOPROTEASE DOMAIN"/>
    <property type="match status" value="1"/>
</dbReference>
<dbReference type="PANTHER" id="PTHR11905:SF32">
    <property type="entry name" value="DISINTEGRIN AND METALLOPROTEINASE DOMAIN-CONTAINING PROTEIN 28"/>
    <property type="match status" value="1"/>
</dbReference>
<dbReference type="Pfam" id="PF00200">
    <property type="entry name" value="Disintegrin"/>
    <property type="match status" value="1"/>
</dbReference>
<dbReference type="PRINTS" id="PR00289">
    <property type="entry name" value="DISINTEGRIN"/>
</dbReference>
<dbReference type="SMART" id="SM00050">
    <property type="entry name" value="DISIN"/>
    <property type="match status" value="1"/>
</dbReference>
<dbReference type="SUPFAM" id="SSF57552">
    <property type="entry name" value="Blood coagulation inhibitor (disintegrin)"/>
    <property type="match status" value="1"/>
</dbReference>
<dbReference type="PROSITE" id="PS50215">
    <property type="entry name" value="ADAM_MEPRO"/>
    <property type="match status" value="1"/>
</dbReference>
<dbReference type="PROSITE" id="PS00427">
    <property type="entry name" value="DISINTEGRIN_1"/>
    <property type="match status" value="1"/>
</dbReference>
<dbReference type="PROSITE" id="PS50214">
    <property type="entry name" value="DISINTEGRIN_2"/>
    <property type="match status" value="1"/>
</dbReference>
<reference key="1">
    <citation type="journal article" date="1998" name="Mol. Cells">
        <title>Cloning and characterization of novel disintegrins from Agkistrodon halys venom.</title>
        <authorList>
            <person name="Park D.-S."/>
            <person name="Kang I.-C."/>
            <person name="Kim H.-D."/>
            <person name="Chung K.-H."/>
            <person name="Kim D.-S."/>
            <person name="Yun Y.-D."/>
        </authorList>
    </citation>
    <scope>NUCLEOTIDE SEQUENCE [MRNA]</scope>
    <source>
        <tissue>Venom gland</tissue>
    </source>
</reference>
<comment type="function">
    <text evidence="1">Snake venom zinc metalloproteinase that inhibits ADP-induced platelet aggregation (probably by binding integrin alpha-IIb/beta-3 (ITGA2B/ITGB3)) and degrades fibrinogen.</text>
</comment>
<comment type="cofactor">
    <cofactor evidence="1">
        <name>Zn(2+)</name>
        <dbReference type="ChEBI" id="CHEBI:29105"/>
    </cofactor>
    <text evidence="1">Binds 1 zinc ion per subunit.</text>
</comment>
<comment type="subunit">
    <text evidence="1">Monomer (disintegrin).</text>
</comment>
<comment type="subcellular location">
    <subcellularLocation>
        <location evidence="6">Secreted</location>
    </subcellularLocation>
</comment>
<comment type="tissue specificity">
    <text evidence="6">Expressed by the venom gland.</text>
</comment>
<comment type="miscellaneous">
    <text>The disintegrin domain belongs to the long disintegrin subfamily.</text>
</comment>
<comment type="similarity">
    <text evidence="5">Belongs to the venom metalloproteinase (M12B) family. P-II subfamily. P-IIb sub-subfamily.</text>
</comment>
<organism>
    <name type="scientific">Gloydius brevicauda</name>
    <name type="common">Korean slamosa snake</name>
    <name type="synonym">Agkistrodon halys brevicaudus</name>
    <dbReference type="NCBI Taxonomy" id="3148161"/>
    <lineage>
        <taxon>Eukaryota</taxon>
        <taxon>Metazoa</taxon>
        <taxon>Chordata</taxon>
        <taxon>Craniata</taxon>
        <taxon>Vertebrata</taxon>
        <taxon>Euteleostomi</taxon>
        <taxon>Lepidosauria</taxon>
        <taxon>Squamata</taxon>
        <taxon>Bifurcata</taxon>
        <taxon>Unidentata</taxon>
        <taxon>Episquamata</taxon>
        <taxon>Toxicofera</taxon>
        <taxon>Serpentes</taxon>
        <taxon>Colubroidea</taxon>
        <taxon>Viperidae</taxon>
        <taxon>Crotalinae</taxon>
        <taxon>Gloydius</taxon>
    </lineage>
</organism>
<sequence length="146" mass="15620">SCPCDANSCIMSATLSNEPSSRFSDCSFSLPSRFSDCSFNQYSSDIIHYHECLLNEPSRTDIVSPPVCGNYYPEVGEDCDCGPPANCQNPCCDAATCGLTTGSQCAEGLCCDQCRLKKAGTICRKARGDNPDDRCTGQSGVCPRNT</sequence>